<reference key="1">
    <citation type="journal article" date="2011" name="J. Bacteriol.">
        <title>Comparative genomics of 28 Salmonella enterica isolates: evidence for CRISPR-mediated adaptive sublineage evolution.</title>
        <authorList>
            <person name="Fricke W.F."/>
            <person name="Mammel M.K."/>
            <person name="McDermott P.F."/>
            <person name="Tartera C."/>
            <person name="White D.G."/>
            <person name="Leclerc J.E."/>
            <person name="Ravel J."/>
            <person name="Cebula T.A."/>
        </authorList>
    </citation>
    <scope>NUCLEOTIDE SEQUENCE [LARGE SCALE GENOMIC DNA]</scope>
    <source>
        <strain>CVM19633</strain>
    </source>
</reference>
<sequence>MLYKGDTLYLDWLEDGIAELVFDAPGSVNKLDTATVASLGQALEVLEKQHDLKGLLLRSNKAAFIVGADITEFLSLFLVPEEQLSQWLHFANSVFNRLEDLPVPTLAAVNGYALGGGCECVLATDYRLATPDLRIGLPETKLGIMPGFGGSVRMPRMLGADSALEIIAAGKDIGAEQALKIGLVDGVVKQEKLIDGAIAVLRQAITGDLDWRAKRQPKLEPLKLSKIEAAMSFTIAKGMVAQTAGKHYPAPMTAVKTIEAAARFGREEALNLENKSFVPLAHTNEARALVGIFLNDQYVKGKAKKLTKDIETPKQAAVLGAGIMGGGIAYQSAWKGVPVIMKDINDKSLNLGMTEAAKLLNKQLERGKIDGLKLAGVISTIHPTLDYAGFDRVDVVVEAVVENPKVKKAVLAETEQKVRPETVLASNTSTIPIRELASALERPENFCGMHFFNPVHRMPLVEIIRGEKSSDETIAKVVAWASKMGKTPIVVNDCPGFFVNRVLFPYFAGFSQLLRDGADFRKVDKVMEKQFGWPMGPAYLLDVVGIDTAHHAQAVMAAGFPQRMQKEYRDAIDALFDASRFGQKNGLGFWRYKEDSKGKPKKEEDAAVDDLLASVSQPKRDFSDDEIIARMMIPMINEVVRCLEEGIIASPAEADMALVYGLGFPPFHGGAFRWLDTQGSAKYLDMAQQYQHLGPLYEVPEGLRNKARHNEPYYPPVEPARPVGSLKTA</sequence>
<evidence type="ECO:0000255" key="1">
    <source>
        <dbReference type="HAMAP-Rule" id="MF_01621"/>
    </source>
</evidence>
<evidence type="ECO:0000256" key="2">
    <source>
        <dbReference type="SAM" id="MobiDB-lite"/>
    </source>
</evidence>
<keyword id="KW-0276">Fatty acid metabolism</keyword>
<keyword id="KW-0413">Isomerase</keyword>
<keyword id="KW-0442">Lipid degradation</keyword>
<keyword id="KW-0443">Lipid metabolism</keyword>
<keyword id="KW-0456">Lyase</keyword>
<keyword id="KW-0511">Multifunctional enzyme</keyword>
<keyword id="KW-0520">NAD</keyword>
<keyword id="KW-0560">Oxidoreductase</keyword>
<dbReference type="EC" id="4.2.1.17" evidence="1"/>
<dbReference type="EC" id="5.1.2.3" evidence="1"/>
<dbReference type="EC" id="5.3.3.8" evidence="1"/>
<dbReference type="EC" id="1.1.1.35" evidence="1"/>
<dbReference type="EMBL" id="CP001127">
    <property type="protein sequence ID" value="ACF89643.1"/>
    <property type="molecule type" value="Genomic_DNA"/>
</dbReference>
<dbReference type="RefSeq" id="WP_000966013.1">
    <property type="nucleotide sequence ID" value="NC_011094.1"/>
</dbReference>
<dbReference type="SMR" id="B4TNZ1"/>
<dbReference type="KEGG" id="sew:SeSA_A4190"/>
<dbReference type="HOGENOM" id="CLU_009834_16_3_6"/>
<dbReference type="UniPathway" id="UPA00659"/>
<dbReference type="Proteomes" id="UP000001865">
    <property type="component" value="Chromosome"/>
</dbReference>
<dbReference type="GO" id="GO:0036125">
    <property type="term" value="C:fatty acid beta-oxidation multienzyme complex"/>
    <property type="evidence" value="ECO:0007669"/>
    <property type="project" value="InterPro"/>
</dbReference>
<dbReference type="GO" id="GO:0008692">
    <property type="term" value="F:3-hydroxybutyryl-CoA epimerase activity"/>
    <property type="evidence" value="ECO:0007669"/>
    <property type="project" value="UniProtKB-UniRule"/>
</dbReference>
<dbReference type="GO" id="GO:0004165">
    <property type="term" value="F:delta(3)-delta(2)-enoyl-CoA isomerase activity"/>
    <property type="evidence" value="ECO:0007669"/>
    <property type="project" value="UniProtKB-UniRule"/>
</dbReference>
<dbReference type="GO" id="GO:0004300">
    <property type="term" value="F:enoyl-CoA hydratase activity"/>
    <property type="evidence" value="ECO:0007669"/>
    <property type="project" value="UniProtKB-UniRule"/>
</dbReference>
<dbReference type="GO" id="GO:0016509">
    <property type="term" value="F:long-chain-3-hydroxyacyl-CoA dehydrogenase activity"/>
    <property type="evidence" value="ECO:0007669"/>
    <property type="project" value="TreeGrafter"/>
</dbReference>
<dbReference type="GO" id="GO:0070403">
    <property type="term" value="F:NAD+ binding"/>
    <property type="evidence" value="ECO:0007669"/>
    <property type="project" value="InterPro"/>
</dbReference>
<dbReference type="GO" id="GO:0006635">
    <property type="term" value="P:fatty acid beta-oxidation"/>
    <property type="evidence" value="ECO:0007669"/>
    <property type="project" value="UniProtKB-UniRule"/>
</dbReference>
<dbReference type="CDD" id="cd06558">
    <property type="entry name" value="crotonase-like"/>
    <property type="match status" value="1"/>
</dbReference>
<dbReference type="FunFam" id="1.10.1040.50:FF:000001">
    <property type="entry name" value="Fatty acid oxidation complex subunit alpha"/>
    <property type="match status" value="1"/>
</dbReference>
<dbReference type="FunFam" id="3.90.226.10:FF:000018">
    <property type="entry name" value="Fatty acid oxidation complex subunit alpha"/>
    <property type="match status" value="1"/>
</dbReference>
<dbReference type="FunFam" id="3.40.50.720:FF:000009">
    <property type="entry name" value="Fatty oxidation complex, alpha subunit"/>
    <property type="match status" value="1"/>
</dbReference>
<dbReference type="Gene3D" id="1.10.1040.50">
    <property type="match status" value="1"/>
</dbReference>
<dbReference type="Gene3D" id="3.90.226.10">
    <property type="entry name" value="2-enoyl-CoA Hydratase, Chain A, domain 1"/>
    <property type="match status" value="1"/>
</dbReference>
<dbReference type="Gene3D" id="3.40.50.720">
    <property type="entry name" value="NAD(P)-binding Rossmann-like Domain"/>
    <property type="match status" value="1"/>
</dbReference>
<dbReference type="HAMAP" id="MF_01621">
    <property type="entry name" value="FadB"/>
    <property type="match status" value="1"/>
</dbReference>
<dbReference type="InterPro" id="IPR006180">
    <property type="entry name" value="3-OHacyl-CoA_DH_CS"/>
</dbReference>
<dbReference type="InterPro" id="IPR006176">
    <property type="entry name" value="3-OHacyl-CoA_DH_NAD-bd"/>
</dbReference>
<dbReference type="InterPro" id="IPR006108">
    <property type="entry name" value="3HC_DH_C"/>
</dbReference>
<dbReference type="InterPro" id="IPR008927">
    <property type="entry name" value="6-PGluconate_DH-like_C_sf"/>
</dbReference>
<dbReference type="InterPro" id="IPR029045">
    <property type="entry name" value="ClpP/crotonase-like_dom_sf"/>
</dbReference>
<dbReference type="InterPro" id="IPR018376">
    <property type="entry name" value="Enoyl-CoA_hyd/isom_CS"/>
</dbReference>
<dbReference type="InterPro" id="IPR001753">
    <property type="entry name" value="Enoyl-CoA_hydra/iso"/>
</dbReference>
<dbReference type="InterPro" id="IPR050136">
    <property type="entry name" value="FA_oxidation_alpha_subunit"/>
</dbReference>
<dbReference type="InterPro" id="IPR012799">
    <property type="entry name" value="FadB"/>
</dbReference>
<dbReference type="InterPro" id="IPR036291">
    <property type="entry name" value="NAD(P)-bd_dom_sf"/>
</dbReference>
<dbReference type="NCBIfam" id="TIGR02437">
    <property type="entry name" value="FadB"/>
    <property type="match status" value="1"/>
</dbReference>
<dbReference type="NCBIfam" id="NF008727">
    <property type="entry name" value="PRK11730.1"/>
    <property type="match status" value="1"/>
</dbReference>
<dbReference type="PANTHER" id="PTHR43612">
    <property type="entry name" value="TRIFUNCTIONAL ENZYME SUBUNIT ALPHA"/>
    <property type="match status" value="1"/>
</dbReference>
<dbReference type="PANTHER" id="PTHR43612:SF3">
    <property type="entry name" value="TRIFUNCTIONAL ENZYME SUBUNIT ALPHA, MITOCHONDRIAL"/>
    <property type="match status" value="1"/>
</dbReference>
<dbReference type="Pfam" id="PF00725">
    <property type="entry name" value="3HCDH"/>
    <property type="match status" value="2"/>
</dbReference>
<dbReference type="Pfam" id="PF02737">
    <property type="entry name" value="3HCDH_N"/>
    <property type="match status" value="1"/>
</dbReference>
<dbReference type="Pfam" id="PF00378">
    <property type="entry name" value="ECH_1"/>
    <property type="match status" value="1"/>
</dbReference>
<dbReference type="SUPFAM" id="SSF48179">
    <property type="entry name" value="6-phosphogluconate dehydrogenase C-terminal domain-like"/>
    <property type="match status" value="2"/>
</dbReference>
<dbReference type="SUPFAM" id="SSF52096">
    <property type="entry name" value="ClpP/crotonase"/>
    <property type="match status" value="1"/>
</dbReference>
<dbReference type="SUPFAM" id="SSF51735">
    <property type="entry name" value="NAD(P)-binding Rossmann-fold domains"/>
    <property type="match status" value="1"/>
</dbReference>
<dbReference type="PROSITE" id="PS00067">
    <property type="entry name" value="3HCDH"/>
    <property type="match status" value="1"/>
</dbReference>
<dbReference type="PROSITE" id="PS00166">
    <property type="entry name" value="ENOYL_COA_HYDRATASE"/>
    <property type="match status" value="1"/>
</dbReference>
<gene>
    <name evidence="1" type="primary">fadB</name>
    <name type="ordered locus">SeSA_A4190</name>
</gene>
<comment type="function">
    <text evidence="1">Involved in the aerobic and anaerobic degradation of long-chain fatty acids via beta-oxidation cycle. Catalyzes the formation of 3-oxoacyl-CoA from enoyl-CoA via L-3-hydroxyacyl-CoA. It can also use D-3-hydroxyacyl-CoA and cis-3-enoyl-CoA as substrate.</text>
</comment>
<comment type="catalytic activity">
    <reaction evidence="1">
        <text>a (3S)-3-hydroxyacyl-CoA + NAD(+) = a 3-oxoacyl-CoA + NADH + H(+)</text>
        <dbReference type="Rhea" id="RHEA:22432"/>
        <dbReference type="ChEBI" id="CHEBI:15378"/>
        <dbReference type="ChEBI" id="CHEBI:57318"/>
        <dbReference type="ChEBI" id="CHEBI:57540"/>
        <dbReference type="ChEBI" id="CHEBI:57945"/>
        <dbReference type="ChEBI" id="CHEBI:90726"/>
        <dbReference type="EC" id="1.1.1.35"/>
    </reaction>
</comment>
<comment type="catalytic activity">
    <reaction evidence="1">
        <text>a (3S)-3-hydroxyacyl-CoA = a (2E)-enoyl-CoA + H2O</text>
        <dbReference type="Rhea" id="RHEA:16105"/>
        <dbReference type="ChEBI" id="CHEBI:15377"/>
        <dbReference type="ChEBI" id="CHEBI:57318"/>
        <dbReference type="ChEBI" id="CHEBI:58856"/>
        <dbReference type="EC" id="4.2.1.17"/>
    </reaction>
</comment>
<comment type="catalytic activity">
    <reaction evidence="1">
        <text>a 4-saturated-(3S)-3-hydroxyacyl-CoA = a (3E)-enoyl-CoA + H2O</text>
        <dbReference type="Rhea" id="RHEA:20724"/>
        <dbReference type="ChEBI" id="CHEBI:15377"/>
        <dbReference type="ChEBI" id="CHEBI:58521"/>
        <dbReference type="ChEBI" id="CHEBI:137480"/>
        <dbReference type="EC" id="4.2.1.17"/>
    </reaction>
</comment>
<comment type="catalytic activity">
    <reaction evidence="1">
        <text>(3S)-3-hydroxybutanoyl-CoA = (3R)-3-hydroxybutanoyl-CoA</text>
        <dbReference type="Rhea" id="RHEA:21760"/>
        <dbReference type="ChEBI" id="CHEBI:57315"/>
        <dbReference type="ChEBI" id="CHEBI:57316"/>
        <dbReference type="EC" id="5.1.2.3"/>
    </reaction>
</comment>
<comment type="catalytic activity">
    <reaction evidence="1">
        <text>a (3Z)-enoyl-CoA = a 4-saturated (2E)-enoyl-CoA</text>
        <dbReference type="Rhea" id="RHEA:45900"/>
        <dbReference type="ChEBI" id="CHEBI:85097"/>
        <dbReference type="ChEBI" id="CHEBI:85489"/>
        <dbReference type="EC" id="5.3.3.8"/>
    </reaction>
</comment>
<comment type="catalytic activity">
    <reaction evidence="1">
        <text>a (3E)-enoyl-CoA = a 4-saturated (2E)-enoyl-CoA</text>
        <dbReference type="Rhea" id="RHEA:45228"/>
        <dbReference type="ChEBI" id="CHEBI:58521"/>
        <dbReference type="ChEBI" id="CHEBI:85097"/>
        <dbReference type="EC" id="5.3.3.8"/>
    </reaction>
</comment>
<comment type="pathway">
    <text evidence="1">Lipid metabolism; fatty acid beta-oxidation.</text>
</comment>
<comment type="subunit">
    <text evidence="1">Heterotetramer of two alpha chains (FadB) and two beta chains (FadA).</text>
</comment>
<comment type="similarity">
    <text evidence="1">In the N-terminal section; belongs to the enoyl-CoA hydratase/isomerase family.</text>
</comment>
<comment type="similarity">
    <text evidence="1">In the C-terminal section; belongs to the 3-hydroxyacyl-CoA dehydrogenase family.</text>
</comment>
<name>FADB_SALSV</name>
<organism>
    <name type="scientific">Salmonella schwarzengrund (strain CVM19633)</name>
    <dbReference type="NCBI Taxonomy" id="439843"/>
    <lineage>
        <taxon>Bacteria</taxon>
        <taxon>Pseudomonadati</taxon>
        <taxon>Pseudomonadota</taxon>
        <taxon>Gammaproteobacteria</taxon>
        <taxon>Enterobacterales</taxon>
        <taxon>Enterobacteriaceae</taxon>
        <taxon>Salmonella</taxon>
    </lineage>
</organism>
<protein>
    <recommendedName>
        <fullName evidence="1">Fatty acid oxidation complex subunit alpha</fullName>
    </recommendedName>
    <domain>
        <recommendedName>
            <fullName evidence="1">Enoyl-CoA hydratase/Delta(3)-cis-Delta(2)-trans-enoyl-CoA isomerase/3-hydroxybutyryl-CoA epimerase</fullName>
            <ecNumber evidence="1">4.2.1.17</ecNumber>
            <ecNumber evidence="1">5.1.2.3</ecNumber>
            <ecNumber evidence="1">5.3.3.8</ecNumber>
        </recommendedName>
    </domain>
    <domain>
        <recommendedName>
            <fullName evidence="1">3-hydroxyacyl-CoA dehydrogenase</fullName>
            <ecNumber evidence="1">1.1.1.35</ecNumber>
        </recommendedName>
    </domain>
</protein>
<proteinExistence type="inferred from homology"/>
<accession>B4TNZ1</accession>
<feature type="chain" id="PRO_1000186052" description="Fatty acid oxidation complex subunit alpha">
    <location>
        <begin position="1"/>
        <end position="729"/>
    </location>
</feature>
<feature type="region of interest" description="Enoyl-CoA hydratase/isomerase" evidence="1">
    <location>
        <begin position="1"/>
        <end position="189"/>
    </location>
</feature>
<feature type="region of interest" description="3-hydroxyacyl-CoA dehydrogenase" evidence="1">
    <location>
        <begin position="311"/>
        <end position="729"/>
    </location>
</feature>
<feature type="region of interest" description="Disordered" evidence="2">
    <location>
        <begin position="708"/>
        <end position="729"/>
    </location>
</feature>
<feature type="active site" description="For 3-hydroxyacyl-CoA dehydrogenase activity" evidence="1">
    <location>
        <position position="450"/>
    </location>
</feature>
<feature type="binding site" evidence="1">
    <location>
        <position position="296"/>
    </location>
    <ligand>
        <name>substrate</name>
    </ligand>
</feature>
<feature type="binding site" evidence="1">
    <location>
        <position position="324"/>
    </location>
    <ligand>
        <name>NAD(+)</name>
        <dbReference type="ChEBI" id="CHEBI:57540"/>
    </ligand>
</feature>
<feature type="binding site" evidence="1">
    <location>
        <position position="343"/>
    </location>
    <ligand>
        <name>NAD(+)</name>
        <dbReference type="ChEBI" id="CHEBI:57540"/>
    </ligand>
</feature>
<feature type="binding site" evidence="1">
    <location>
        <begin position="400"/>
        <end position="402"/>
    </location>
    <ligand>
        <name>NAD(+)</name>
        <dbReference type="ChEBI" id="CHEBI:57540"/>
    </ligand>
</feature>
<feature type="binding site" evidence="1">
    <location>
        <position position="407"/>
    </location>
    <ligand>
        <name>NAD(+)</name>
        <dbReference type="ChEBI" id="CHEBI:57540"/>
    </ligand>
</feature>
<feature type="binding site" evidence="1">
    <location>
        <position position="429"/>
    </location>
    <ligand>
        <name>NAD(+)</name>
        <dbReference type="ChEBI" id="CHEBI:57540"/>
    </ligand>
</feature>
<feature type="binding site" evidence="1">
    <location>
        <position position="453"/>
    </location>
    <ligand>
        <name>NAD(+)</name>
        <dbReference type="ChEBI" id="CHEBI:57540"/>
    </ligand>
</feature>
<feature type="binding site" evidence="1">
    <location>
        <position position="500"/>
    </location>
    <ligand>
        <name>substrate</name>
    </ligand>
</feature>
<feature type="binding site" evidence="1">
    <location>
        <position position="660"/>
    </location>
    <ligand>
        <name>substrate</name>
    </ligand>
</feature>
<feature type="site" description="Important for catalytic activity" evidence="1">
    <location>
        <position position="119"/>
    </location>
</feature>
<feature type="site" description="Important for catalytic activity" evidence="1">
    <location>
        <position position="139"/>
    </location>
</feature>